<gene>
    <name type="primary">NRG2</name>
    <name type="synonym">NTAK</name>
</gene>
<protein>
    <recommendedName>
        <fullName>Pro-neuregulin-2, membrane-bound isoform</fullName>
        <shortName>Pro-NRG2</shortName>
    </recommendedName>
    <component>
        <recommendedName>
            <fullName>Neuregulin-2</fullName>
            <shortName>NRG-2</shortName>
        </recommendedName>
        <alternativeName>
            <fullName>Divergent of neuregulin-1</fullName>
            <shortName>DON-1</shortName>
        </alternativeName>
        <alternativeName>
            <fullName>Neural- and thymus-derived activator for ERBB kinases</fullName>
            <shortName>NTAK</shortName>
        </alternativeName>
    </component>
</protein>
<name>NRG2_HUMAN</name>
<feature type="propeptide" id="PRO_0000019472" evidence="1">
    <location>
        <begin position="1"/>
        <end position="111"/>
    </location>
</feature>
<feature type="chain" id="PRO_0000019473" description="Pro-neuregulin-2, membrane-bound isoform">
    <location>
        <begin position="112"/>
        <end position="850"/>
    </location>
</feature>
<feature type="chain" id="PRO_0000019474" description="Neuregulin-2">
    <location>
        <begin position="112"/>
        <end position="404"/>
    </location>
</feature>
<feature type="topological domain" description="Extracellular" evidence="2">
    <location>
        <begin position="112"/>
        <end position="405"/>
    </location>
</feature>
<feature type="transmembrane region" description="Helical; Note=Internal signal sequence" evidence="2">
    <location>
        <begin position="406"/>
        <end position="426"/>
    </location>
</feature>
<feature type="topological domain" description="Cytoplasmic" evidence="2">
    <location>
        <begin position="427"/>
        <end position="850"/>
    </location>
</feature>
<feature type="domain" description="Ig-like C2-type">
    <location>
        <begin position="237"/>
        <end position="332"/>
    </location>
</feature>
<feature type="domain" description="EGF-like" evidence="3">
    <location>
        <begin position="341"/>
        <end position="382"/>
    </location>
</feature>
<feature type="region of interest" description="Disordered" evidence="4">
    <location>
        <begin position="1"/>
        <end position="96"/>
    </location>
</feature>
<feature type="region of interest" description="Disordered" evidence="4">
    <location>
        <begin position="492"/>
        <end position="535"/>
    </location>
</feature>
<feature type="region of interest" description="Disordered" evidence="4">
    <location>
        <begin position="566"/>
        <end position="585"/>
    </location>
</feature>
<feature type="region of interest" description="Disordered" evidence="4">
    <location>
        <begin position="647"/>
        <end position="681"/>
    </location>
</feature>
<feature type="region of interest" description="Disordered" evidence="4">
    <location>
        <begin position="700"/>
        <end position="788"/>
    </location>
</feature>
<feature type="region of interest" description="Disordered" evidence="4">
    <location>
        <begin position="801"/>
        <end position="850"/>
    </location>
</feature>
<feature type="compositionally biased region" description="Low complexity" evidence="4">
    <location>
        <begin position="20"/>
        <end position="59"/>
    </location>
</feature>
<feature type="compositionally biased region" description="Pro residues" evidence="4">
    <location>
        <begin position="60"/>
        <end position="74"/>
    </location>
</feature>
<feature type="compositionally biased region" description="Low complexity" evidence="4">
    <location>
        <begin position="75"/>
        <end position="92"/>
    </location>
</feature>
<feature type="compositionally biased region" description="Low complexity" evidence="4">
    <location>
        <begin position="494"/>
        <end position="506"/>
    </location>
</feature>
<feature type="compositionally biased region" description="Basic and acidic residues" evidence="4">
    <location>
        <begin position="514"/>
        <end position="527"/>
    </location>
</feature>
<feature type="compositionally biased region" description="Pro residues" evidence="4">
    <location>
        <begin position="651"/>
        <end position="665"/>
    </location>
</feature>
<feature type="compositionally biased region" description="Low complexity" evidence="4">
    <location>
        <begin position="750"/>
        <end position="767"/>
    </location>
</feature>
<feature type="glycosylation site" description="N-linked (GlcNAc...) asparagine" evidence="2">
    <location>
        <position position="52"/>
    </location>
</feature>
<feature type="glycosylation site" description="N-linked (GlcNAc...) asparagine" evidence="2">
    <location>
        <position position="53"/>
    </location>
</feature>
<feature type="glycosylation site" description="N-linked (GlcNAc...) asparagine" evidence="2">
    <location>
        <position position="147"/>
    </location>
</feature>
<feature type="glycosylation site" description="N-linked (GlcNAc...) asparagine" evidence="2">
    <location>
        <position position="278"/>
    </location>
</feature>
<feature type="glycosylation site" description="N-linked (GlcNAc...) asparagine" evidence="2">
    <location>
        <position position="346"/>
    </location>
</feature>
<feature type="disulfide bond" evidence="1">
    <location>
        <begin position="257"/>
        <end position="311"/>
    </location>
</feature>
<feature type="disulfide bond" evidence="1">
    <location>
        <begin position="345"/>
        <end position="359"/>
    </location>
</feature>
<feature type="disulfide bond" evidence="1">
    <location>
        <begin position="353"/>
        <end position="370"/>
    </location>
</feature>
<feature type="disulfide bond" evidence="1">
    <location>
        <begin position="372"/>
        <end position="381"/>
    </location>
</feature>
<feature type="splice variant" id="VSP_003452" description="In isoform DON-1B." evidence="6">
    <location>
        <begin position="1"/>
        <end position="241"/>
    </location>
</feature>
<feature type="splice variant" id="VSP_003451" description="In isoform DON-1R." evidence="6">
    <original>MRQVCCSALPPPPLEKGRCSSYSDSSSSSSERSSSSSSSSSESGSSSRSSSNNSSISRPAAPPEPRPQQQPQPRSPAARRAAARSRAAAAGGMRRDPAPGFSMLLFGVSLACYSPSLKSVQDQAYKAPVVVEGKVQGLVPAGGSSSNSTREPPASGRVALVKVLDKWPLRSGGLQREQVISVGSCVPLERNQRYIFFLEPTEQPLVFKTAFAPLDTNGKNLKKEVGKILCTDC</original>
    <variation>MSESRRRGRGRGKKHPEGRKREREPDPGEK</variation>
    <location>
        <begin position="1"/>
        <end position="233"/>
    </location>
</feature>
<feature type="splice variant" id="VSP_003454" description="In isoform 4." evidence="7">
    <original>NGFFGQRCLEKLPLRLYMPDPKQK</original>
    <variation>VGYTGDRCQQFAMVNFSKHLGFELKE</variation>
    <location>
        <begin position="374"/>
        <end position="397"/>
    </location>
</feature>
<feature type="splice variant" id="VSP_003453" description="In isoform 2." evidence="7">
    <original>NGFFGQRCLEKLPLRLYMPDPKQ</original>
    <variation>VGYTGDRCQQFAMVNFS</variation>
    <location>
        <begin position="374"/>
        <end position="396"/>
    </location>
</feature>
<feature type="splice variant" id="VSP_003458" description="In isoform 5." evidence="7">
    <original>KAEELYQKRVLTITGICVALLVVGIVCVVA</original>
    <variation>SVLWDTPGTGVSSSQWSTSPKPRSCTRRGS</variation>
    <location>
        <begin position="397"/>
        <end position="426"/>
    </location>
</feature>
<feature type="splice variant" id="VSP_003456" description="In isoform 6." evidence="7">
    <original>KAEELYQKRVLTITGICVALLVVGIV</original>
    <variation>SVLWDTPGTGVSSSQWSTSPSTLDLN</variation>
    <location>
        <begin position="397"/>
        <end position="422"/>
    </location>
</feature>
<feature type="splice variant" id="VSP_003455" description="In isoform 3 and isoform DON-1B." evidence="6">
    <original>K</original>
    <variation>KHLGFELKE</variation>
    <location>
        <position position="397"/>
    </location>
</feature>
<feature type="splice variant" id="VSP_003457" description="In isoform 6." evidence="7">
    <location>
        <begin position="423"/>
        <end position="850"/>
    </location>
</feature>
<feature type="splice variant" id="VSP_003459" description="In isoform 5." evidence="7">
    <location>
        <begin position="427"/>
        <end position="850"/>
    </location>
</feature>
<accession>O14511</accession>
<reference key="1">
    <citation type="journal article" date="1997" name="J. Biochem.">
        <title>A novel brain-derived member of the epidermal growth factor family that interacts with ErbB3 and ErbB4.</title>
        <authorList>
            <person name="Higashiyama S."/>
            <person name="Horikawa M."/>
            <person name="Yamada K."/>
            <person name="Ichino N."/>
            <person name="Nakano N."/>
            <person name="Nakagawa T."/>
            <person name="Miyagawa J."/>
            <person name="Matsushita N."/>
            <person name="Nagatsu T."/>
            <person name="Taniguchi N."/>
            <person name="Ishiguro H."/>
        </authorList>
    </citation>
    <scope>NUCLEOTIDE SEQUENCE [MRNA] (ISOFORM 1)</scope>
    <source>
        <tissue>Neuroblastoma</tissue>
    </source>
</reference>
<reference key="2">
    <citation type="journal article" date="1997" name="Mol. Cell. Biol.">
        <title>Characterization of a neuregulin-related gene, Don-1, that is highly expressed in restricted regions of the cerebellum and hippocampus.</title>
        <authorList>
            <person name="Busfield S.J."/>
            <person name="Michnick D.A."/>
            <person name="Chickering T.W."/>
            <person name="Revett T.L."/>
            <person name="Ma J."/>
            <person name="Woolf E.A."/>
            <person name="Comrack C.A."/>
            <person name="Dussault B.J."/>
            <person name="Woolf J."/>
            <person name="Goodearl A.D.J."/>
            <person name="Gearing D.P."/>
        </authorList>
    </citation>
    <scope>NUCLEOTIDE SEQUENCE [MRNA] (ISOFORMS DON-1B AND DON-1R)</scope>
    <source>
        <tissue>Fetal brain</tissue>
    </source>
</reference>
<reference key="3">
    <citation type="journal article" date="1999" name="Hum. Genet.">
        <title>The human neuregulin 2 (NRG2) gene: cloning, mapping and evaluation as a candidate for the autosomal recessive form of Charcot-Marie-Tooth disease linked to 5q.</title>
        <authorList>
            <person name="Ring H.Z."/>
            <person name="Chang H."/>
            <person name="Guilbot A."/>
            <person name="Brice A."/>
            <person name="LeGuern E."/>
            <person name="Francke U."/>
        </authorList>
    </citation>
    <scope>NUCLEOTIDE SEQUENCE [GENOMIC DNA]</scope>
    <scope>ALTERNATIVE SPLICING (ISOFORMS 1; 2; 3; 4; 5 AND 6)</scope>
    <source>
        <tissue>Fetal brain</tissue>
        <tissue>Lung</tissue>
    </source>
</reference>
<reference key="4">
    <citation type="journal article" date="2000" name="J. Biol. Chem.">
        <title>Ligand discrimination in signaling through an ErbB4 receptor homodimer.</title>
        <authorList>
            <person name="Sweeney C."/>
            <person name="Lai C."/>
            <person name="Riese D.J. II"/>
            <person name="Diamonti A.J."/>
            <person name="Cantley L.C."/>
            <person name="Carraway K.L. III"/>
        </authorList>
    </citation>
    <scope>INTERACTION WITH ERBB4</scope>
</reference>
<dbReference type="EMBL" id="AB005060">
    <property type="protein sequence ID" value="BAA23417.1"/>
    <property type="molecule type" value="mRNA"/>
</dbReference>
<dbReference type="EMBL" id="AF119162">
    <property type="protein sequence ID" value="AAF28848.1"/>
    <property type="molecule type" value="Genomic_DNA"/>
</dbReference>
<dbReference type="EMBL" id="AF119151">
    <property type="protein sequence ID" value="AAF28848.1"/>
    <property type="status" value="JOINED"/>
    <property type="molecule type" value="Genomic_DNA"/>
</dbReference>
<dbReference type="EMBL" id="AF119152">
    <property type="protein sequence ID" value="AAF28848.1"/>
    <property type="status" value="JOINED"/>
    <property type="molecule type" value="Genomic_DNA"/>
</dbReference>
<dbReference type="EMBL" id="AF119153">
    <property type="protein sequence ID" value="AAF28848.1"/>
    <property type="status" value="JOINED"/>
    <property type="molecule type" value="Genomic_DNA"/>
</dbReference>
<dbReference type="EMBL" id="AF119154">
    <property type="protein sequence ID" value="AAF28848.1"/>
    <property type="status" value="JOINED"/>
    <property type="molecule type" value="Genomic_DNA"/>
</dbReference>
<dbReference type="EMBL" id="AF119155">
    <property type="protein sequence ID" value="AAF28848.1"/>
    <property type="status" value="JOINED"/>
    <property type="molecule type" value="Genomic_DNA"/>
</dbReference>
<dbReference type="EMBL" id="AF119158">
    <property type="protein sequence ID" value="AAF28848.1"/>
    <property type="status" value="JOINED"/>
    <property type="molecule type" value="Genomic_DNA"/>
</dbReference>
<dbReference type="EMBL" id="AF119159">
    <property type="protein sequence ID" value="AAF28848.1"/>
    <property type="status" value="JOINED"/>
    <property type="molecule type" value="Genomic_DNA"/>
</dbReference>
<dbReference type="EMBL" id="AF119160">
    <property type="protein sequence ID" value="AAF28848.1"/>
    <property type="status" value="JOINED"/>
    <property type="molecule type" value="Genomic_DNA"/>
</dbReference>
<dbReference type="EMBL" id="AF119161">
    <property type="protein sequence ID" value="AAF28848.1"/>
    <property type="status" value="JOINED"/>
    <property type="molecule type" value="Genomic_DNA"/>
</dbReference>
<dbReference type="EMBL" id="AF119162">
    <property type="protein sequence ID" value="AAF28849.1"/>
    <property type="molecule type" value="Genomic_DNA"/>
</dbReference>
<dbReference type="EMBL" id="AF119151">
    <property type="protein sequence ID" value="AAF28849.1"/>
    <property type="status" value="JOINED"/>
    <property type="molecule type" value="Genomic_DNA"/>
</dbReference>
<dbReference type="EMBL" id="AF119152">
    <property type="protein sequence ID" value="AAF28849.1"/>
    <property type="status" value="JOINED"/>
    <property type="molecule type" value="Genomic_DNA"/>
</dbReference>
<dbReference type="EMBL" id="AF119153">
    <property type="protein sequence ID" value="AAF28849.1"/>
    <property type="status" value="JOINED"/>
    <property type="molecule type" value="Genomic_DNA"/>
</dbReference>
<dbReference type="EMBL" id="AF119154">
    <property type="protein sequence ID" value="AAF28849.1"/>
    <property type="status" value="JOINED"/>
    <property type="molecule type" value="Genomic_DNA"/>
</dbReference>
<dbReference type="EMBL" id="AF119156">
    <property type="protein sequence ID" value="AAF28849.1"/>
    <property type="status" value="JOINED"/>
    <property type="molecule type" value="Genomic_DNA"/>
</dbReference>
<dbReference type="EMBL" id="AF119158">
    <property type="protein sequence ID" value="AAF28849.1"/>
    <property type="status" value="JOINED"/>
    <property type="molecule type" value="Genomic_DNA"/>
</dbReference>
<dbReference type="EMBL" id="AF119159">
    <property type="protein sequence ID" value="AAF28849.1"/>
    <property type="status" value="JOINED"/>
    <property type="molecule type" value="Genomic_DNA"/>
</dbReference>
<dbReference type="EMBL" id="AF119160">
    <property type="protein sequence ID" value="AAF28849.1"/>
    <property type="status" value="JOINED"/>
    <property type="molecule type" value="Genomic_DNA"/>
</dbReference>
<dbReference type="EMBL" id="AF119161">
    <property type="protein sequence ID" value="AAF28849.1"/>
    <property type="status" value="JOINED"/>
    <property type="molecule type" value="Genomic_DNA"/>
</dbReference>
<dbReference type="EMBL" id="AF119162">
    <property type="protein sequence ID" value="AAF28850.1"/>
    <property type="molecule type" value="Genomic_DNA"/>
</dbReference>
<dbReference type="EMBL" id="AF119151">
    <property type="protein sequence ID" value="AAF28850.1"/>
    <property type="status" value="JOINED"/>
    <property type="molecule type" value="Genomic_DNA"/>
</dbReference>
<dbReference type="EMBL" id="AF119152">
    <property type="protein sequence ID" value="AAF28850.1"/>
    <property type="status" value="JOINED"/>
    <property type="molecule type" value="Genomic_DNA"/>
</dbReference>
<dbReference type="EMBL" id="AF119153">
    <property type="protein sequence ID" value="AAF28850.1"/>
    <property type="status" value="JOINED"/>
    <property type="molecule type" value="Genomic_DNA"/>
</dbReference>
<dbReference type="EMBL" id="AF119154">
    <property type="protein sequence ID" value="AAF28850.1"/>
    <property type="status" value="JOINED"/>
    <property type="molecule type" value="Genomic_DNA"/>
</dbReference>
<dbReference type="EMBL" id="AF119155">
    <property type="protein sequence ID" value="AAF28850.1"/>
    <property type="status" value="JOINED"/>
    <property type="molecule type" value="Genomic_DNA"/>
</dbReference>
<dbReference type="EMBL" id="AF119157">
    <property type="protein sequence ID" value="AAF28850.1"/>
    <property type="status" value="JOINED"/>
    <property type="molecule type" value="Genomic_DNA"/>
</dbReference>
<dbReference type="EMBL" id="AF119158">
    <property type="protein sequence ID" value="AAF28850.1"/>
    <property type="status" value="JOINED"/>
    <property type="molecule type" value="Genomic_DNA"/>
</dbReference>
<dbReference type="EMBL" id="AF119159">
    <property type="protein sequence ID" value="AAF28850.1"/>
    <property type="status" value="JOINED"/>
    <property type="molecule type" value="Genomic_DNA"/>
</dbReference>
<dbReference type="EMBL" id="AF119160">
    <property type="protein sequence ID" value="AAF28850.1"/>
    <property type="status" value="JOINED"/>
    <property type="molecule type" value="Genomic_DNA"/>
</dbReference>
<dbReference type="EMBL" id="AF119161">
    <property type="protein sequence ID" value="AAF28850.1"/>
    <property type="status" value="JOINED"/>
    <property type="molecule type" value="Genomic_DNA"/>
</dbReference>
<dbReference type="EMBL" id="AF119162">
    <property type="protein sequence ID" value="AAF28851.1"/>
    <property type="molecule type" value="Genomic_DNA"/>
</dbReference>
<dbReference type="EMBL" id="AF119151">
    <property type="protein sequence ID" value="AAF28851.1"/>
    <property type="status" value="JOINED"/>
    <property type="molecule type" value="Genomic_DNA"/>
</dbReference>
<dbReference type="EMBL" id="AF119152">
    <property type="protein sequence ID" value="AAF28851.1"/>
    <property type="status" value="JOINED"/>
    <property type="molecule type" value="Genomic_DNA"/>
</dbReference>
<dbReference type="EMBL" id="AF119153">
    <property type="protein sequence ID" value="AAF28851.1"/>
    <property type="status" value="JOINED"/>
    <property type="molecule type" value="Genomic_DNA"/>
</dbReference>
<dbReference type="EMBL" id="AF119154">
    <property type="protein sequence ID" value="AAF28851.1"/>
    <property type="status" value="JOINED"/>
    <property type="molecule type" value="Genomic_DNA"/>
</dbReference>
<dbReference type="EMBL" id="AF119156">
    <property type="protein sequence ID" value="AAF28851.1"/>
    <property type="status" value="JOINED"/>
    <property type="molecule type" value="Genomic_DNA"/>
</dbReference>
<dbReference type="EMBL" id="AF119157">
    <property type="protein sequence ID" value="AAF28851.1"/>
    <property type="status" value="JOINED"/>
    <property type="molecule type" value="Genomic_DNA"/>
</dbReference>
<dbReference type="EMBL" id="AF119158">
    <property type="protein sequence ID" value="AAF28851.1"/>
    <property type="status" value="JOINED"/>
    <property type="molecule type" value="Genomic_DNA"/>
</dbReference>
<dbReference type="EMBL" id="AF119159">
    <property type="protein sequence ID" value="AAF28851.1"/>
    <property type="status" value="JOINED"/>
    <property type="molecule type" value="Genomic_DNA"/>
</dbReference>
<dbReference type="EMBL" id="AF119160">
    <property type="protein sequence ID" value="AAF28851.1"/>
    <property type="status" value="JOINED"/>
    <property type="molecule type" value="Genomic_DNA"/>
</dbReference>
<dbReference type="EMBL" id="AF119161">
    <property type="protein sequence ID" value="AAF28851.1"/>
    <property type="status" value="JOINED"/>
    <property type="molecule type" value="Genomic_DNA"/>
</dbReference>
<dbReference type="EMBL" id="AF119158">
    <property type="protein sequence ID" value="AAF28852.1"/>
    <property type="molecule type" value="Genomic_DNA"/>
</dbReference>
<dbReference type="EMBL" id="AF119151">
    <property type="protein sequence ID" value="AAF28852.1"/>
    <property type="status" value="JOINED"/>
    <property type="molecule type" value="Genomic_DNA"/>
</dbReference>
<dbReference type="EMBL" id="AF119152">
    <property type="protein sequence ID" value="AAF28852.1"/>
    <property type="status" value="JOINED"/>
    <property type="molecule type" value="Genomic_DNA"/>
</dbReference>
<dbReference type="EMBL" id="AF119153">
    <property type="protein sequence ID" value="AAF28852.1"/>
    <property type="status" value="JOINED"/>
    <property type="molecule type" value="Genomic_DNA"/>
</dbReference>
<dbReference type="EMBL" id="AF119154">
    <property type="protein sequence ID" value="AAF28852.1"/>
    <property type="status" value="JOINED"/>
    <property type="molecule type" value="Genomic_DNA"/>
</dbReference>
<dbReference type="EMBL" id="AF119155">
    <property type="protein sequence ID" value="AAF28852.1"/>
    <property type="status" value="JOINED"/>
    <property type="molecule type" value="Genomic_DNA"/>
</dbReference>
<dbReference type="EMBL" id="AF119156">
    <property type="protein sequence ID" value="AAF28852.1"/>
    <property type="status" value="JOINED"/>
    <property type="molecule type" value="Genomic_DNA"/>
</dbReference>
<dbReference type="EMBL" id="AF119157">
    <property type="protein sequence ID" value="AAF28853.1"/>
    <property type="molecule type" value="Genomic_DNA"/>
</dbReference>
<dbReference type="EMBL" id="AF119151">
    <property type="protein sequence ID" value="AAF28853.1"/>
    <property type="status" value="JOINED"/>
    <property type="molecule type" value="Genomic_DNA"/>
</dbReference>
<dbReference type="EMBL" id="AF119152">
    <property type="protein sequence ID" value="AAF28853.1"/>
    <property type="status" value="JOINED"/>
    <property type="molecule type" value="Genomic_DNA"/>
</dbReference>
<dbReference type="EMBL" id="AF119153">
    <property type="protein sequence ID" value="AAF28853.1"/>
    <property type="status" value="JOINED"/>
    <property type="molecule type" value="Genomic_DNA"/>
</dbReference>
<dbReference type="EMBL" id="AF119154">
    <property type="protein sequence ID" value="AAF28853.1"/>
    <property type="status" value="JOINED"/>
    <property type="molecule type" value="Genomic_DNA"/>
</dbReference>
<dbReference type="EMBL" id="AF119155">
    <property type="protein sequence ID" value="AAF28853.1"/>
    <property type="status" value="JOINED"/>
    <property type="molecule type" value="Genomic_DNA"/>
</dbReference>
<dbReference type="EMBL" id="AF119156">
    <property type="protein sequence ID" value="AAF28853.1"/>
    <property type="status" value="JOINED"/>
    <property type="molecule type" value="Genomic_DNA"/>
</dbReference>
<dbReference type="CCDS" id="CCDS4217.1">
    <molecule id="O14511-1"/>
</dbReference>
<dbReference type="CCDS" id="CCDS93793.1">
    <molecule id="O14511-8"/>
</dbReference>
<dbReference type="PIR" id="JC5700">
    <property type="entry name" value="JC5700"/>
</dbReference>
<dbReference type="RefSeq" id="NP_001171864.1">
    <property type="nucleotide sequence ID" value="NM_001184935.1"/>
</dbReference>
<dbReference type="RefSeq" id="NP_001397709.1">
    <molecule id="O14511-8"/>
    <property type="nucleotide sequence ID" value="NM_001410780.1"/>
</dbReference>
<dbReference type="RefSeq" id="NP_004874.1">
    <molecule id="O14511-1"/>
    <property type="nucleotide sequence ID" value="NM_004883.3"/>
</dbReference>
<dbReference type="RefSeq" id="NP_053584.1">
    <molecule id="O14511-2"/>
    <property type="nucleotide sequence ID" value="NM_013981.4"/>
</dbReference>
<dbReference type="RefSeq" id="NP_053585.1">
    <molecule id="O14511-3"/>
    <property type="nucleotide sequence ID" value="NM_013982.3"/>
</dbReference>
<dbReference type="RefSeq" id="NP_053586.1">
    <molecule id="O14511-4"/>
    <property type="nucleotide sequence ID" value="NM_013983.3"/>
</dbReference>
<dbReference type="RefSeq" id="XP_006714873.1">
    <molecule id="O14511-6"/>
    <property type="nucleotide sequence ID" value="XM_006714810.4"/>
</dbReference>
<dbReference type="RefSeq" id="XP_054209807.1">
    <molecule id="O14511-6"/>
    <property type="nucleotide sequence ID" value="XM_054353832.1"/>
</dbReference>
<dbReference type="BioGRID" id="114917">
    <property type="interactions" value="5"/>
</dbReference>
<dbReference type="FunCoup" id="O14511">
    <property type="interactions" value="409"/>
</dbReference>
<dbReference type="IntAct" id="O14511">
    <property type="interactions" value="2"/>
</dbReference>
<dbReference type="STRING" id="9606.ENSP00000354910"/>
<dbReference type="GlyCosmos" id="O14511">
    <property type="glycosylation" value="5 sites, No reported glycans"/>
</dbReference>
<dbReference type="GlyGen" id="O14511">
    <property type="glycosylation" value="8 sites, 1 O-linked glycan (3 sites)"/>
</dbReference>
<dbReference type="iPTMnet" id="O14511"/>
<dbReference type="PhosphoSitePlus" id="O14511"/>
<dbReference type="BioMuta" id="NRG2"/>
<dbReference type="jPOST" id="O14511"/>
<dbReference type="MassIVE" id="O14511"/>
<dbReference type="PaxDb" id="9606-ENSP00000354910"/>
<dbReference type="PeptideAtlas" id="O14511"/>
<dbReference type="ProteomicsDB" id="48047">
    <molecule id="O14511-1"/>
</dbReference>
<dbReference type="ProteomicsDB" id="48048">
    <molecule id="O14511-2"/>
</dbReference>
<dbReference type="ProteomicsDB" id="48049">
    <molecule id="O14511-3"/>
</dbReference>
<dbReference type="ProteomicsDB" id="48050">
    <molecule id="O14511-4"/>
</dbReference>
<dbReference type="ProteomicsDB" id="48051">
    <molecule id="O14511-5"/>
</dbReference>
<dbReference type="ProteomicsDB" id="48052">
    <molecule id="O14511-6"/>
</dbReference>
<dbReference type="ProteomicsDB" id="48053">
    <molecule id="O14511-7"/>
</dbReference>
<dbReference type="ProteomicsDB" id="48054">
    <molecule id="O14511-8"/>
</dbReference>
<dbReference type="Antibodypedia" id="26820">
    <property type="antibodies" value="195 antibodies from 25 providers"/>
</dbReference>
<dbReference type="DNASU" id="9542"/>
<dbReference type="Ensembl" id="ENST00000289409.8">
    <molecule id="O14511-2"/>
    <property type="protein sequence ID" value="ENSP00000289409.4"/>
    <property type="gene ID" value="ENSG00000158458.21"/>
</dbReference>
<dbReference type="Ensembl" id="ENST00000289422.11">
    <molecule id="O14511-3"/>
    <property type="protein sequence ID" value="ENSP00000289422.7"/>
    <property type="gene ID" value="ENSG00000158458.21"/>
</dbReference>
<dbReference type="Ensembl" id="ENST00000340391.8">
    <molecule id="O14511-8"/>
    <property type="protein sequence ID" value="ENSP00000342660.3"/>
    <property type="gene ID" value="ENSG00000158458.21"/>
</dbReference>
<dbReference type="Ensembl" id="ENST00000358522.7">
    <molecule id="O14511-4"/>
    <property type="protein sequence ID" value="ENSP00000351323.3"/>
    <property type="gene ID" value="ENSG00000158458.21"/>
</dbReference>
<dbReference type="Ensembl" id="ENST00000361474.6">
    <molecule id="O14511-1"/>
    <property type="protein sequence ID" value="ENSP00000354910.1"/>
    <property type="gene ID" value="ENSG00000158458.21"/>
</dbReference>
<dbReference type="Ensembl" id="ENST00000378238.5">
    <molecule id="O14511-5"/>
    <property type="protein sequence ID" value="ENSP00000367483.4"/>
    <property type="gene ID" value="ENSG00000158458.21"/>
</dbReference>
<dbReference type="GeneID" id="9542"/>
<dbReference type="KEGG" id="hsa:9542"/>
<dbReference type="MANE-Select" id="ENST00000361474.6">
    <property type="protein sequence ID" value="ENSP00000354910.1"/>
    <property type="RefSeq nucleotide sequence ID" value="NM_004883.3"/>
    <property type="RefSeq protein sequence ID" value="NP_004874.1"/>
</dbReference>
<dbReference type="UCSC" id="uc003lev.3">
    <molecule id="O14511-1"/>
    <property type="organism name" value="human"/>
</dbReference>
<dbReference type="AGR" id="HGNC:7998"/>
<dbReference type="CTD" id="9542"/>
<dbReference type="DisGeNET" id="9542"/>
<dbReference type="GeneCards" id="NRG2"/>
<dbReference type="HGNC" id="HGNC:7998">
    <property type="gene designation" value="NRG2"/>
</dbReference>
<dbReference type="HPA" id="ENSG00000158458">
    <property type="expression patterns" value="Tissue enhanced (brain)"/>
</dbReference>
<dbReference type="MIM" id="603818">
    <property type="type" value="gene"/>
</dbReference>
<dbReference type="neXtProt" id="NX_O14511"/>
<dbReference type="OpenTargets" id="ENSG00000158458"/>
<dbReference type="PharmGKB" id="PA31777"/>
<dbReference type="VEuPathDB" id="HostDB:ENSG00000158458"/>
<dbReference type="eggNOG" id="ENOG502QRNM">
    <property type="taxonomic scope" value="Eukaryota"/>
</dbReference>
<dbReference type="GeneTree" id="ENSGT00940000158778"/>
<dbReference type="HOGENOM" id="CLU_023628_0_0_1"/>
<dbReference type="InParanoid" id="O14511"/>
<dbReference type="OMA" id="CNMEDER"/>
<dbReference type="OrthoDB" id="6127080at2759"/>
<dbReference type="PAN-GO" id="O14511">
    <property type="GO annotations" value="4 GO annotations based on evolutionary models"/>
</dbReference>
<dbReference type="PhylomeDB" id="O14511"/>
<dbReference type="TreeFam" id="TF332469"/>
<dbReference type="PathwayCommons" id="O14511"/>
<dbReference type="Reactome" id="R-HSA-1227986">
    <property type="pathway name" value="Signaling by ERBB2"/>
</dbReference>
<dbReference type="Reactome" id="R-HSA-1236394">
    <property type="pathway name" value="Signaling by ERBB4"/>
</dbReference>
<dbReference type="Reactome" id="R-HSA-1250196">
    <property type="pathway name" value="SHC1 events in ERBB2 signaling"/>
</dbReference>
<dbReference type="Reactome" id="R-HSA-1250342">
    <property type="pathway name" value="PI3K events in ERBB4 signaling"/>
</dbReference>
<dbReference type="Reactome" id="R-HSA-1250347">
    <property type="pathway name" value="SHC1 events in ERBB4 signaling"/>
</dbReference>
<dbReference type="Reactome" id="R-HSA-1251985">
    <property type="pathway name" value="Nuclear signaling by ERBB4"/>
</dbReference>
<dbReference type="Reactome" id="R-HSA-1257604">
    <property type="pathway name" value="PIP3 activates AKT signaling"/>
</dbReference>
<dbReference type="Reactome" id="R-HSA-1306955">
    <property type="pathway name" value="GRB7 events in ERBB2 signaling"/>
</dbReference>
<dbReference type="Reactome" id="R-HSA-1358803">
    <property type="pathway name" value="Downregulation of ERBB2:ERBB3 signaling"/>
</dbReference>
<dbReference type="Reactome" id="R-HSA-1963640">
    <property type="pathway name" value="GRB2 events in ERBB2 signaling"/>
</dbReference>
<dbReference type="Reactome" id="R-HSA-1963642">
    <property type="pathway name" value="PI3K events in ERBB2 signaling"/>
</dbReference>
<dbReference type="Reactome" id="R-HSA-2219530">
    <property type="pathway name" value="Constitutive Signaling by Aberrant PI3K in Cancer"/>
</dbReference>
<dbReference type="Reactome" id="R-HSA-5673001">
    <property type="pathway name" value="RAF/MAP kinase cascade"/>
</dbReference>
<dbReference type="Reactome" id="R-HSA-6785631">
    <property type="pathway name" value="ERBB2 Regulates Cell Motility"/>
</dbReference>
<dbReference type="Reactome" id="R-HSA-6811558">
    <property type="pathway name" value="PI5P, PP2A and IER3 Regulate PI3K/AKT Signaling"/>
</dbReference>
<dbReference type="Reactome" id="R-HSA-8847993">
    <property type="pathway name" value="ERBB2 Activates PTK6 Signaling"/>
</dbReference>
<dbReference type="Reactome" id="R-HSA-8863795">
    <property type="pathway name" value="Downregulation of ERBB2 signaling"/>
</dbReference>
<dbReference type="Reactome" id="R-HSA-9664565">
    <property type="pathway name" value="Signaling by ERBB2 KD Mutants"/>
</dbReference>
<dbReference type="Reactome" id="R-HSA-9665686">
    <property type="pathway name" value="Signaling by ERBB2 TMD/JMD mutants"/>
</dbReference>
<dbReference type="SignaLink" id="O14511"/>
<dbReference type="SIGNOR" id="O14511"/>
<dbReference type="BioGRID-ORCS" id="9542">
    <property type="hits" value="19 hits in 1136 CRISPR screens"/>
</dbReference>
<dbReference type="ChiTaRS" id="NRG2">
    <property type="organism name" value="human"/>
</dbReference>
<dbReference type="GeneWiki" id="NRG2"/>
<dbReference type="GenomeRNAi" id="9542"/>
<dbReference type="Pharos" id="O14511">
    <property type="development level" value="Tbio"/>
</dbReference>
<dbReference type="PRO" id="PR:O14511"/>
<dbReference type="Proteomes" id="UP000005640">
    <property type="component" value="Chromosome 5"/>
</dbReference>
<dbReference type="RNAct" id="O14511">
    <property type="molecule type" value="protein"/>
</dbReference>
<dbReference type="Bgee" id="ENSG00000158458">
    <property type="expression patterns" value="Expressed in buccal mucosa cell and 139 other cell types or tissues"/>
</dbReference>
<dbReference type="ExpressionAtlas" id="O14511">
    <property type="expression patterns" value="baseline and differential"/>
</dbReference>
<dbReference type="GO" id="GO:0005576">
    <property type="term" value="C:extracellular region"/>
    <property type="evidence" value="ECO:0000304"/>
    <property type="project" value="Reactome"/>
</dbReference>
<dbReference type="GO" id="GO:0005615">
    <property type="term" value="C:extracellular space"/>
    <property type="evidence" value="ECO:0000318"/>
    <property type="project" value="GO_Central"/>
</dbReference>
<dbReference type="GO" id="GO:0005886">
    <property type="term" value="C:plasma membrane"/>
    <property type="evidence" value="ECO:0007669"/>
    <property type="project" value="UniProtKB-SubCell"/>
</dbReference>
<dbReference type="GO" id="GO:0008083">
    <property type="term" value="F:growth factor activity"/>
    <property type="evidence" value="ECO:0007669"/>
    <property type="project" value="UniProtKB-KW"/>
</dbReference>
<dbReference type="GO" id="GO:0005102">
    <property type="term" value="F:signaling receptor binding"/>
    <property type="evidence" value="ECO:0000318"/>
    <property type="project" value="GO_Central"/>
</dbReference>
<dbReference type="GO" id="GO:0038130">
    <property type="term" value="P:ERBB4 signaling pathway"/>
    <property type="evidence" value="ECO:0000318"/>
    <property type="project" value="GO_Central"/>
</dbReference>
<dbReference type="GO" id="GO:0035556">
    <property type="term" value="P:intracellular signal transduction"/>
    <property type="evidence" value="ECO:0000318"/>
    <property type="project" value="GO_Central"/>
</dbReference>
<dbReference type="GO" id="GO:0007399">
    <property type="term" value="P:nervous system development"/>
    <property type="evidence" value="ECO:0007669"/>
    <property type="project" value="InterPro"/>
</dbReference>
<dbReference type="GO" id="GO:0007165">
    <property type="term" value="P:signal transduction"/>
    <property type="evidence" value="ECO:0000304"/>
    <property type="project" value="ProtInc"/>
</dbReference>
<dbReference type="CDD" id="cd05750">
    <property type="entry name" value="Ig_Pro_neuregulin"/>
    <property type="match status" value="1"/>
</dbReference>
<dbReference type="FunFam" id="2.60.40.10:FF:000354">
    <property type="entry name" value="Pro-neuregulin-2, membrane-bound isoform"/>
    <property type="match status" value="1"/>
</dbReference>
<dbReference type="FunFam" id="2.10.25.10:FF:000116">
    <property type="entry name" value="pro-neuregulin-2, membrane-bound isoform"/>
    <property type="match status" value="1"/>
</dbReference>
<dbReference type="Gene3D" id="2.60.40.10">
    <property type="entry name" value="Immunoglobulins"/>
    <property type="match status" value="1"/>
</dbReference>
<dbReference type="Gene3D" id="2.10.25.10">
    <property type="entry name" value="Laminin"/>
    <property type="match status" value="1"/>
</dbReference>
<dbReference type="InterPro" id="IPR000742">
    <property type="entry name" value="EGF-like_dom"/>
</dbReference>
<dbReference type="InterPro" id="IPR007110">
    <property type="entry name" value="Ig-like_dom"/>
</dbReference>
<dbReference type="InterPro" id="IPR036179">
    <property type="entry name" value="Ig-like_dom_sf"/>
</dbReference>
<dbReference type="InterPro" id="IPR013783">
    <property type="entry name" value="Ig-like_fold"/>
</dbReference>
<dbReference type="InterPro" id="IPR013098">
    <property type="entry name" value="Ig_I-set"/>
</dbReference>
<dbReference type="InterPro" id="IPR003599">
    <property type="entry name" value="Ig_sub"/>
</dbReference>
<dbReference type="InterPro" id="IPR003598">
    <property type="entry name" value="Ig_sub2"/>
</dbReference>
<dbReference type="InterPro" id="IPR040180">
    <property type="entry name" value="Neuregulin"/>
</dbReference>
<dbReference type="InterPro" id="IPR002154">
    <property type="entry name" value="Neuregulin_C"/>
</dbReference>
<dbReference type="PANTHER" id="PTHR11100">
    <property type="entry name" value="HEREGULIN-NEUREGULIN FAMILY MEMBER"/>
    <property type="match status" value="1"/>
</dbReference>
<dbReference type="PANTHER" id="PTHR11100:SF20">
    <property type="entry name" value="PRO-NEUREGULIN-2, MEMBRANE-BOUND ISOFORM"/>
    <property type="match status" value="1"/>
</dbReference>
<dbReference type="Pfam" id="PF07679">
    <property type="entry name" value="I-set"/>
    <property type="match status" value="1"/>
</dbReference>
<dbReference type="Pfam" id="PF02158">
    <property type="entry name" value="Neuregulin"/>
    <property type="match status" value="1"/>
</dbReference>
<dbReference type="SMART" id="SM00409">
    <property type="entry name" value="IG"/>
    <property type="match status" value="1"/>
</dbReference>
<dbReference type="SMART" id="SM00408">
    <property type="entry name" value="IGc2"/>
    <property type="match status" value="1"/>
</dbReference>
<dbReference type="SUPFAM" id="SSF57196">
    <property type="entry name" value="EGF/Laminin"/>
    <property type="match status" value="1"/>
</dbReference>
<dbReference type="SUPFAM" id="SSF48726">
    <property type="entry name" value="Immunoglobulin"/>
    <property type="match status" value="1"/>
</dbReference>
<dbReference type="PROSITE" id="PS00022">
    <property type="entry name" value="EGF_1"/>
    <property type="match status" value="1"/>
</dbReference>
<dbReference type="PROSITE" id="PS01186">
    <property type="entry name" value="EGF_2"/>
    <property type="match status" value="1"/>
</dbReference>
<dbReference type="PROSITE" id="PS50026">
    <property type="entry name" value="EGF_3"/>
    <property type="match status" value="1"/>
</dbReference>
<dbReference type="PROSITE" id="PS50835">
    <property type="entry name" value="IG_LIKE"/>
    <property type="match status" value="1"/>
</dbReference>
<sequence>MRQVCCSALPPPPLEKGRCSSYSDSSSSSSERSSSSSSSSSESGSSSRSSSNNSSISRPAAPPEPRPQQQPQPRSPAARRAAARSRAAAAGGMRRDPAPGFSMLLFGVSLACYSPSLKSVQDQAYKAPVVVEGKVQGLVPAGGSSSNSTREPPASGRVALVKVLDKWPLRSGGLQREQVISVGSCVPLERNQRYIFFLEPTEQPLVFKTAFAPLDTNGKNLKKEVGKILCTDCATRPKLKKMKSQTGQVGEKQSLKCEAAAGNPQPSYRWFKDGKELNRSRDIRIKYGNGRKNSRLQFNKVKVEDAGEYVCEAENILGKDTVRGRLYVNSVSTTLSSWSGHARKCNETAKSYCVNGGVCYYIEGINQLSCKCPNGFFGQRCLEKLPLRLYMPDPKQKAEELYQKRVLTITGICVALLVVGIVCVVAYCKTKKQRKQMHNHLRQNMCPAHQNRSLANGPSHPRLDPEEIQMADYISKNVPATDHVIRRETETTFSGSHSCSPSHHCSTATPTSSHRHESHTWSLERSESLTSDSQSGIMLSSVGTSKCNSPACVEARARRAAAYNLEERRRATAPPYHDSVDSLRDSPHSERYVSALTTPARLSPVDFHYSLATQVPTFEITSPNSAHAVSLPPAAPISYRLAEQQPLLRHPAPPGPGPGPGPGPGPGADMQRSYDSYYYPAAGPGPRRGTCALGGSLGSLPASPFRIPEDDEYETTQECAPPPPPRPRARGASRRTSAGPRRWRRSRLNGLAAQRARAARDSLSLSSGSGGGSASASDDDADDADGALAAESTPFLGLRGAHDALRSDSPPLCPAADSRTYYSLDSHSTRASSRHSRGPPPRAKQDSAPL</sequence>
<evidence type="ECO:0000250" key="1"/>
<evidence type="ECO:0000255" key="2"/>
<evidence type="ECO:0000255" key="3">
    <source>
        <dbReference type="PROSITE-ProRule" id="PRU00076"/>
    </source>
</evidence>
<evidence type="ECO:0000256" key="4">
    <source>
        <dbReference type="SAM" id="MobiDB-lite"/>
    </source>
</evidence>
<evidence type="ECO:0000269" key="5">
    <source>
    </source>
</evidence>
<evidence type="ECO:0000303" key="6">
    <source>
    </source>
</evidence>
<evidence type="ECO:0000305" key="7"/>
<keyword id="KW-0025">Alternative splicing</keyword>
<keyword id="KW-1003">Cell membrane</keyword>
<keyword id="KW-1015">Disulfide bond</keyword>
<keyword id="KW-0245">EGF-like domain</keyword>
<keyword id="KW-0325">Glycoprotein</keyword>
<keyword id="KW-0339">Growth factor</keyword>
<keyword id="KW-0393">Immunoglobulin domain</keyword>
<keyword id="KW-0472">Membrane</keyword>
<keyword id="KW-1267">Proteomics identification</keyword>
<keyword id="KW-1185">Reference proteome</keyword>
<keyword id="KW-0964">Secreted</keyword>
<keyword id="KW-0812">Transmembrane</keyword>
<keyword id="KW-1133">Transmembrane helix</keyword>
<organism>
    <name type="scientific">Homo sapiens</name>
    <name type="common">Human</name>
    <dbReference type="NCBI Taxonomy" id="9606"/>
    <lineage>
        <taxon>Eukaryota</taxon>
        <taxon>Metazoa</taxon>
        <taxon>Chordata</taxon>
        <taxon>Craniata</taxon>
        <taxon>Vertebrata</taxon>
        <taxon>Euteleostomi</taxon>
        <taxon>Mammalia</taxon>
        <taxon>Eutheria</taxon>
        <taxon>Euarchontoglires</taxon>
        <taxon>Primates</taxon>
        <taxon>Haplorrhini</taxon>
        <taxon>Catarrhini</taxon>
        <taxon>Hominidae</taxon>
        <taxon>Homo</taxon>
    </lineage>
</organism>
<comment type="function">
    <text>Direct ligand for ERBB3 and ERBB4 tyrosine kinase receptors. Concomitantly recruits ERBB1 and ERBB2 coreceptors, resulting in ligand-stimulated tyrosine phosphorylation and activation of the ERBB receptors. May also promote the heterodimerization with the EGF receptor.</text>
</comment>
<comment type="subunit">
    <text evidence="5">Interacts with ERBB3 and ERBB4.</text>
</comment>
<comment type="subcellular location">
    <molecule>Pro-neuregulin-2, membrane-bound isoform</molecule>
    <subcellularLocation>
        <location evidence="1">Cell membrane</location>
        <topology evidence="1">Single-pass type I membrane protein</topology>
    </subcellularLocation>
    <text evidence="1">Does not seem to be active.</text>
</comment>
<comment type="subcellular location">
    <molecule>Neuregulin-2</molecule>
    <subcellularLocation>
        <location evidence="1">Secreted</location>
    </subcellularLocation>
</comment>
<comment type="alternative products">
    <event type="alternative splicing"/>
    <isoform>
        <id>O14511-1</id>
        <name>1</name>
        <sequence type="displayed"/>
    </isoform>
    <isoform>
        <id>O14511-2</id>
        <name>2</name>
        <sequence type="described" ref="VSP_003453"/>
    </isoform>
    <isoform>
        <id>O14511-3</id>
        <name>3</name>
        <sequence type="described" ref="VSP_003455"/>
    </isoform>
    <isoform>
        <id>O14511-4</id>
        <name>4</name>
        <sequence type="described" ref="VSP_003454"/>
    </isoform>
    <isoform>
        <id>O14511-5</id>
        <name>5</name>
        <sequence type="described" ref="VSP_003458 VSP_003459"/>
    </isoform>
    <isoform>
        <id>O14511-6</id>
        <name>6</name>
        <sequence type="described" ref="VSP_003456 VSP_003457"/>
    </isoform>
    <isoform>
        <id>O14511-7</id>
        <name>DON-1B</name>
        <sequence type="described" ref="VSP_003452 VSP_003455"/>
    </isoform>
    <isoform>
        <id>O14511-8</id>
        <name>DON-1R</name>
        <sequence type="described" ref="VSP_003451"/>
    </isoform>
</comment>
<comment type="tissue specificity">
    <text>Restricted to the cerebellum in the adult.</text>
</comment>
<comment type="domain">
    <text evidence="1">The cytoplasmic domain may be involved in the regulation of trafficking and proteolytic processing. Regulation of the proteolytic processing involves initial intracellular domain dimerization (By similarity).</text>
</comment>
<comment type="domain">
    <text evidence="1">ERBB receptor binding is elicited entirely by the EGF-like domain.</text>
</comment>
<comment type="PTM">
    <text evidence="1">Proteolytic cleavage close to the plasma membrane on the external face leads to the release of the soluble growth factor form.</text>
</comment>
<comment type="PTM">
    <text evidence="1">Extensive glycosylation precedes the proteolytic cleavage.</text>
</comment>
<comment type="miscellaneous">
    <molecule>Isoform 5</molecule>
    <text evidence="7">May be produced at very low levels due to a premature stop codon in the mRNA, leading to nonsense-mediated mRNA decay.</text>
</comment>
<comment type="similarity">
    <text evidence="7">Belongs to the neuregulin family.</text>
</comment>
<proteinExistence type="evidence at protein level"/>